<gene>
    <name evidence="1" type="primary">rsmG</name>
    <name type="ordered locus">SAV2710</name>
</gene>
<accession>P64239</accession>
<accession>Q99QT5</accession>
<reference key="1">
    <citation type="journal article" date="2001" name="Lancet">
        <title>Whole genome sequencing of meticillin-resistant Staphylococcus aureus.</title>
        <authorList>
            <person name="Kuroda M."/>
            <person name="Ohta T."/>
            <person name="Uchiyama I."/>
            <person name="Baba T."/>
            <person name="Yuzawa H."/>
            <person name="Kobayashi I."/>
            <person name="Cui L."/>
            <person name="Oguchi A."/>
            <person name="Aoki K."/>
            <person name="Nagai Y."/>
            <person name="Lian J.-Q."/>
            <person name="Ito T."/>
            <person name="Kanamori M."/>
            <person name="Matsumaru H."/>
            <person name="Maruyama A."/>
            <person name="Murakami H."/>
            <person name="Hosoyama A."/>
            <person name="Mizutani-Ui Y."/>
            <person name="Takahashi N.K."/>
            <person name="Sawano T."/>
            <person name="Inoue R."/>
            <person name="Kaito C."/>
            <person name="Sekimizu K."/>
            <person name="Hirakawa H."/>
            <person name="Kuhara S."/>
            <person name="Goto S."/>
            <person name="Yabuzaki J."/>
            <person name="Kanehisa M."/>
            <person name="Yamashita A."/>
            <person name="Oshima K."/>
            <person name="Furuya K."/>
            <person name="Yoshino C."/>
            <person name="Shiba T."/>
            <person name="Hattori M."/>
            <person name="Ogasawara N."/>
            <person name="Hayashi H."/>
            <person name="Hiramatsu K."/>
        </authorList>
    </citation>
    <scope>NUCLEOTIDE SEQUENCE [LARGE SCALE GENOMIC DNA]</scope>
    <source>
        <strain>Mu50 / ATCC 700699</strain>
    </source>
</reference>
<feature type="chain" id="PRO_0000184331" description="Ribosomal RNA small subunit methyltransferase G">
    <location>
        <begin position="1"/>
        <end position="239"/>
    </location>
</feature>
<feature type="region of interest" description="Disordered" evidence="2">
    <location>
        <begin position="214"/>
        <end position="239"/>
    </location>
</feature>
<feature type="binding site" evidence="1">
    <location>
        <position position="77"/>
    </location>
    <ligand>
        <name>S-adenosyl-L-methionine</name>
        <dbReference type="ChEBI" id="CHEBI:59789"/>
    </ligand>
</feature>
<feature type="binding site" evidence="1">
    <location>
        <position position="82"/>
    </location>
    <ligand>
        <name>S-adenosyl-L-methionine</name>
        <dbReference type="ChEBI" id="CHEBI:59789"/>
    </ligand>
</feature>
<feature type="binding site" evidence="1">
    <location>
        <begin position="128"/>
        <end position="129"/>
    </location>
    <ligand>
        <name>S-adenosyl-L-methionine</name>
        <dbReference type="ChEBI" id="CHEBI:59789"/>
    </ligand>
</feature>
<feature type="binding site" evidence="1">
    <location>
        <position position="146"/>
    </location>
    <ligand>
        <name>S-adenosyl-L-methionine</name>
        <dbReference type="ChEBI" id="CHEBI:59789"/>
    </ligand>
</feature>
<evidence type="ECO:0000255" key="1">
    <source>
        <dbReference type="HAMAP-Rule" id="MF_00074"/>
    </source>
</evidence>
<evidence type="ECO:0000256" key="2">
    <source>
        <dbReference type="SAM" id="MobiDB-lite"/>
    </source>
</evidence>
<comment type="function">
    <text evidence="1">Specifically methylates the N7 position of guanine in position 535 of 16S rRNA.</text>
</comment>
<comment type="subcellular location">
    <subcellularLocation>
        <location evidence="1">Cytoplasm</location>
    </subcellularLocation>
</comment>
<comment type="similarity">
    <text evidence="1">Belongs to the methyltransferase superfamily. RNA methyltransferase RsmG family.</text>
</comment>
<name>RSMG_STAAM</name>
<organism>
    <name type="scientific">Staphylococcus aureus (strain Mu50 / ATCC 700699)</name>
    <dbReference type="NCBI Taxonomy" id="158878"/>
    <lineage>
        <taxon>Bacteria</taxon>
        <taxon>Bacillati</taxon>
        <taxon>Bacillota</taxon>
        <taxon>Bacilli</taxon>
        <taxon>Bacillales</taxon>
        <taxon>Staphylococcaceae</taxon>
        <taxon>Staphylococcus</taxon>
    </lineage>
</organism>
<protein>
    <recommendedName>
        <fullName evidence="1">Ribosomal RNA small subunit methyltransferase G</fullName>
        <ecNumber evidence="1">2.1.1.-</ecNumber>
    </recommendedName>
    <alternativeName>
        <fullName evidence="1">16S rRNA 7-methylguanosine methyltransferase</fullName>
        <shortName evidence="1">16S rRNA m7G methyltransferase</shortName>
    </alternativeName>
</protein>
<keyword id="KW-0963">Cytoplasm</keyword>
<keyword id="KW-0489">Methyltransferase</keyword>
<keyword id="KW-0698">rRNA processing</keyword>
<keyword id="KW-0949">S-adenosyl-L-methionine</keyword>
<keyword id="KW-0808">Transferase</keyword>
<sequence>MTVEWLAEQLKEHNIELTETQKQQFQTYYRLLVEWNEKMNLTSITDEHDVYLKHFYDSIAPSFYFDFNQPISICDVGAGAGFPSIPLKIMFPQLKVTIVDSLNKRIQFLNHLASELQLQDVSFIHDRAETFGKGVYRESYDVVTARAVARLSVLSELCLPLIKKGGQFVALKSSKGEEELEEAKFAISVLGGNVTETHTFKLPEDAGERQMFIIDKKRQTPKKYPRKPGTPNKTPLLEK</sequence>
<proteinExistence type="inferred from homology"/>
<dbReference type="EC" id="2.1.1.-" evidence="1"/>
<dbReference type="EMBL" id="BA000017">
    <property type="protein sequence ID" value="BAB58872.1"/>
    <property type="molecule type" value="Genomic_DNA"/>
</dbReference>
<dbReference type="RefSeq" id="WP_000215587.1">
    <property type="nucleotide sequence ID" value="NC_002758.2"/>
</dbReference>
<dbReference type="SMR" id="P64239"/>
<dbReference type="KEGG" id="sav:SAV2710"/>
<dbReference type="HOGENOM" id="CLU_065341_0_0_9"/>
<dbReference type="PhylomeDB" id="P64239"/>
<dbReference type="Proteomes" id="UP000002481">
    <property type="component" value="Chromosome"/>
</dbReference>
<dbReference type="GO" id="GO:0005829">
    <property type="term" value="C:cytosol"/>
    <property type="evidence" value="ECO:0007669"/>
    <property type="project" value="TreeGrafter"/>
</dbReference>
<dbReference type="GO" id="GO:0070043">
    <property type="term" value="F:rRNA (guanine-N7-)-methyltransferase activity"/>
    <property type="evidence" value="ECO:0007669"/>
    <property type="project" value="UniProtKB-UniRule"/>
</dbReference>
<dbReference type="CDD" id="cd02440">
    <property type="entry name" value="AdoMet_MTases"/>
    <property type="match status" value="1"/>
</dbReference>
<dbReference type="FunFam" id="3.40.50.150:FF:000041">
    <property type="entry name" value="Ribosomal RNA small subunit methyltransferase G"/>
    <property type="match status" value="1"/>
</dbReference>
<dbReference type="Gene3D" id="3.40.50.150">
    <property type="entry name" value="Vaccinia Virus protein VP39"/>
    <property type="match status" value="1"/>
</dbReference>
<dbReference type="HAMAP" id="MF_00074">
    <property type="entry name" value="16SrRNA_methyltr_G"/>
    <property type="match status" value="1"/>
</dbReference>
<dbReference type="InterPro" id="IPR003682">
    <property type="entry name" value="rRNA_ssu_MeTfrase_G"/>
</dbReference>
<dbReference type="InterPro" id="IPR029063">
    <property type="entry name" value="SAM-dependent_MTases_sf"/>
</dbReference>
<dbReference type="NCBIfam" id="TIGR00138">
    <property type="entry name" value="rsmG_gidB"/>
    <property type="match status" value="1"/>
</dbReference>
<dbReference type="PANTHER" id="PTHR31760">
    <property type="entry name" value="S-ADENOSYL-L-METHIONINE-DEPENDENT METHYLTRANSFERASES SUPERFAMILY PROTEIN"/>
    <property type="match status" value="1"/>
</dbReference>
<dbReference type="PANTHER" id="PTHR31760:SF0">
    <property type="entry name" value="S-ADENOSYL-L-METHIONINE-DEPENDENT METHYLTRANSFERASES SUPERFAMILY PROTEIN"/>
    <property type="match status" value="1"/>
</dbReference>
<dbReference type="Pfam" id="PF02527">
    <property type="entry name" value="GidB"/>
    <property type="match status" value="1"/>
</dbReference>
<dbReference type="PIRSF" id="PIRSF003078">
    <property type="entry name" value="GidB"/>
    <property type="match status" value="1"/>
</dbReference>
<dbReference type="SUPFAM" id="SSF53335">
    <property type="entry name" value="S-adenosyl-L-methionine-dependent methyltransferases"/>
    <property type="match status" value="1"/>
</dbReference>